<sequence length="294" mass="32247">MASVQLRNVTKAWGDVVVSKDINLEIQDGEFVVFVGPSGCGKSTLLRMIAGLETVTSGDLFIGDTRMNDVPPAERGIGMVFQSYALYPHLSVAENMSFGLKLAGAKKEVINQRVTQVAEVLQLAHLLERNRKALSGGQRPGVAIRTLVAEPRVFLLDEPLSNLDAALRVQMRIEISRLHKRLGRTMIYVTHDQVEAMTLADKIVVLDAGRVAQVGKPLELYHYPADRFVAGFIGSPKMNFLPVKVTATAIEQVQVELPNRQQVWLPVDSAHVQVGANMSLGIRPEHLLPSDIAD</sequence>
<keyword id="KW-0067">ATP-binding</keyword>
<keyword id="KW-0997">Cell inner membrane</keyword>
<keyword id="KW-1003">Cell membrane</keyword>
<keyword id="KW-0472">Membrane</keyword>
<keyword id="KW-0547">Nucleotide-binding</keyword>
<keyword id="KW-0762">Sugar transport</keyword>
<keyword id="KW-1278">Translocase</keyword>
<keyword id="KW-0813">Transport</keyword>
<reference key="1">
    <citation type="journal article" date="1989" name="Mol. Gen. Genet.">
        <title>Comparison of sequences from the malB regions of Salmonella typhimurium and Enterobacter aerogenes with Escherichia coli K12: a potential new regulatory site in the interoperonic region.</title>
        <authorList>
            <person name="Dahl M.K."/>
            <person name="Francoz E."/>
            <person name="Saurin W."/>
            <person name="Boos W."/>
            <person name="Manson M.D."/>
            <person name="Hofnung M."/>
        </authorList>
    </citation>
    <scope>NUCLEOTIDE SEQUENCE [GENOMIC DNA]</scope>
</reference>
<protein>
    <recommendedName>
        <fullName evidence="1">Maltose/maltodextrin import ATP-binding protein MalK</fullName>
        <ecNumber evidence="1">7.5.2.1</ecNumber>
    </recommendedName>
</protein>
<feature type="chain" id="PRO_0000092478" description="Maltose/maltodextrin import ATP-binding protein MalK">
    <location>
        <begin position="1"/>
        <end position="294" status="greater than"/>
    </location>
</feature>
<feature type="domain" description="ABC transporter" evidence="1">
    <location>
        <begin position="4"/>
        <end position="233"/>
    </location>
</feature>
<feature type="binding site" evidence="1">
    <location>
        <begin position="36"/>
        <end position="43"/>
    </location>
    <ligand>
        <name>ATP</name>
        <dbReference type="ChEBI" id="CHEBI:30616"/>
    </ligand>
</feature>
<feature type="non-terminal residue">
    <location>
        <position position="294"/>
    </location>
</feature>
<name>MALK_KLEAE</name>
<comment type="function">
    <text evidence="1">Part of the ABC transporter complex MalEFGK involved in maltose/maltodextrin import. Responsible for energy coupling to the transport system.</text>
</comment>
<comment type="catalytic activity">
    <reaction evidence="1">
        <text>D-maltose(out) + ATP + H2O = D-maltose(in) + ADP + phosphate + H(+)</text>
        <dbReference type="Rhea" id="RHEA:22132"/>
        <dbReference type="ChEBI" id="CHEBI:15377"/>
        <dbReference type="ChEBI" id="CHEBI:15378"/>
        <dbReference type="ChEBI" id="CHEBI:17306"/>
        <dbReference type="ChEBI" id="CHEBI:30616"/>
        <dbReference type="ChEBI" id="CHEBI:43474"/>
        <dbReference type="ChEBI" id="CHEBI:456216"/>
        <dbReference type="EC" id="7.5.2.1"/>
    </reaction>
</comment>
<comment type="subunit">
    <text evidence="1">The complex is composed of two ATP-binding proteins (MalK), two transmembrane proteins (MalG and MalK) and a solute-binding protein (MalE).</text>
</comment>
<comment type="subcellular location">
    <subcellularLocation>
        <location evidence="1">Cell inner membrane</location>
        <topology evidence="1">Peripheral membrane protein</topology>
    </subcellularLocation>
</comment>
<comment type="similarity">
    <text evidence="1">Belongs to the ABC transporter superfamily. Maltooligosaccharide importer (TC 3.A.1.1.1) family.</text>
</comment>
<organism>
    <name type="scientific">Klebsiella aerogenes</name>
    <name type="common">Enterobacter aerogenes</name>
    <dbReference type="NCBI Taxonomy" id="548"/>
    <lineage>
        <taxon>Bacteria</taxon>
        <taxon>Pseudomonadati</taxon>
        <taxon>Pseudomonadota</taxon>
        <taxon>Gammaproteobacteria</taxon>
        <taxon>Enterobacterales</taxon>
        <taxon>Enterobacteriaceae</taxon>
        <taxon>Klebsiella/Raoultella group</taxon>
        <taxon>Klebsiella</taxon>
    </lineage>
</organism>
<accession>P18813</accession>
<dbReference type="EC" id="7.5.2.1" evidence="1"/>
<dbReference type="PIR" id="S05328">
    <property type="entry name" value="S05328"/>
</dbReference>
<dbReference type="SMR" id="P18813"/>
<dbReference type="STRING" id="548.EAG7_03818"/>
<dbReference type="GO" id="GO:0055052">
    <property type="term" value="C:ATP-binding cassette (ABC) transporter complex, substrate-binding subunit-containing"/>
    <property type="evidence" value="ECO:0007669"/>
    <property type="project" value="TreeGrafter"/>
</dbReference>
<dbReference type="GO" id="GO:1990060">
    <property type="term" value="C:maltose transport complex"/>
    <property type="evidence" value="ECO:0007669"/>
    <property type="project" value="TreeGrafter"/>
</dbReference>
<dbReference type="GO" id="GO:0015423">
    <property type="term" value="F:ABC-type maltose transporter activity"/>
    <property type="evidence" value="ECO:0007669"/>
    <property type="project" value="UniProtKB-EC"/>
</dbReference>
<dbReference type="GO" id="GO:0005524">
    <property type="term" value="F:ATP binding"/>
    <property type="evidence" value="ECO:0007669"/>
    <property type="project" value="UniProtKB-KW"/>
</dbReference>
<dbReference type="GO" id="GO:0016887">
    <property type="term" value="F:ATP hydrolysis activity"/>
    <property type="evidence" value="ECO:0007669"/>
    <property type="project" value="InterPro"/>
</dbReference>
<dbReference type="CDD" id="cd03301">
    <property type="entry name" value="ABC_MalK_N"/>
    <property type="match status" value="1"/>
</dbReference>
<dbReference type="FunFam" id="3.40.50.300:FF:000042">
    <property type="entry name" value="Maltose/maltodextrin ABC transporter, ATP-binding protein"/>
    <property type="match status" value="1"/>
</dbReference>
<dbReference type="FunFam" id="2.40.50.100:FF:000014">
    <property type="entry name" value="Maltose/maltodextrin import ATP-binding protein MalK"/>
    <property type="match status" value="1"/>
</dbReference>
<dbReference type="Gene3D" id="2.40.50.100">
    <property type="match status" value="1"/>
</dbReference>
<dbReference type="Gene3D" id="3.40.50.300">
    <property type="entry name" value="P-loop containing nucleotide triphosphate hydrolases"/>
    <property type="match status" value="1"/>
</dbReference>
<dbReference type="InterPro" id="IPR003593">
    <property type="entry name" value="AAA+_ATPase"/>
</dbReference>
<dbReference type="InterPro" id="IPR003439">
    <property type="entry name" value="ABC_transporter-like_ATP-bd"/>
</dbReference>
<dbReference type="InterPro" id="IPR015855">
    <property type="entry name" value="ABC_transpr_MalK-like"/>
</dbReference>
<dbReference type="InterPro" id="IPR047641">
    <property type="entry name" value="ABC_transpr_MalK/UgpC-like"/>
</dbReference>
<dbReference type="InterPro" id="IPR008995">
    <property type="entry name" value="Mo/tungstate-bd_C_term_dom"/>
</dbReference>
<dbReference type="InterPro" id="IPR040582">
    <property type="entry name" value="OB_MalK-like"/>
</dbReference>
<dbReference type="InterPro" id="IPR027417">
    <property type="entry name" value="P-loop_NTPase"/>
</dbReference>
<dbReference type="NCBIfam" id="NF008233">
    <property type="entry name" value="PRK11000.1"/>
    <property type="match status" value="1"/>
</dbReference>
<dbReference type="PANTHER" id="PTHR43875">
    <property type="entry name" value="MALTODEXTRIN IMPORT ATP-BINDING PROTEIN MSMX"/>
    <property type="match status" value="1"/>
</dbReference>
<dbReference type="PANTHER" id="PTHR43875:SF3">
    <property type="entry name" value="MALTOSE_MALTODEXTRIN IMPORT ATP-BINDING PROTEIN MALK"/>
    <property type="match status" value="1"/>
</dbReference>
<dbReference type="Pfam" id="PF00005">
    <property type="entry name" value="ABC_tran"/>
    <property type="match status" value="1"/>
</dbReference>
<dbReference type="Pfam" id="PF17912">
    <property type="entry name" value="OB_MalK"/>
    <property type="match status" value="1"/>
</dbReference>
<dbReference type="SMART" id="SM00382">
    <property type="entry name" value="AAA"/>
    <property type="match status" value="1"/>
</dbReference>
<dbReference type="SUPFAM" id="SSF50331">
    <property type="entry name" value="MOP-like"/>
    <property type="match status" value="1"/>
</dbReference>
<dbReference type="SUPFAM" id="SSF52540">
    <property type="entry name" value="P-loop containing nucleoside triphosphate hydrolases"/>
    <property type="match status" value="1"/>
</dbReference>
<dbReference type="PROSITE" id="PS50893">
    <property type="entry name" value="ABC_TRANSPORTER_2"/>
    <property type="match status" value="1"/>
</dbReference>
<gene>
    <name evidence="1" type="primary">malK</name>
</gene>
<evidence type="ECO:0000255" key="1">
    <source>
        <dbReference type="HAMAP-Rule" id="MF_01709"/>
    </source>
</evidence>
<proteinExistence type="inferred from homology"/>